<feature type="chain" id="PRO_1000007936" description="S-adenosylmethionine synthase">
    <location>
        <begin position="1"/>
        <end position="391"/>
    </location>
</feature>
<feature type="region of interest" description="Flexible loop" evidence="1">
    <location>
        <begin position="98"/>
        <end position="108"/>
    </location>
</feature>
<feature type="binding site" description="in other chain" evidence="1">
    <location>
        <position position="14"/>
    </location>
    <ligand>
        <name>ATP</name>
        <dbReference type="ChEBI" id="CHEBI:30616"/>
        <note>ligand shared between two neighboring subunits</note>
    </ligand>
</feature>
<feature type="binding site" evidence="1">
    <location>
        <position position="16"/>
    </location>
    <ligand>
        <name>Mg(2+)</name>
        <dbReference type="ChEBI" id="CHEBI:18420"/>
    </ligand>
</feature>
<feature type="binding site" evidence="1">
    <location>
        <position position="42"/>
    </location>
    <ligand>
        <name>K(+)</name>
        <dbReference type="ChEBI" id="CHEBI:29103"/>
    </ligand>
</feature>
<feature type="binding site" description="in other chain" evidence="1">
    <location>
        <position position="55"/>
    </location>
    <ligand>
        <name>L-methionine</name>
        <dbReference type="ChEBI" id="CHEBI:57844"/>
        <note>ligand shared between two neighboring subunits</note>
    </ligand>
</feature>
<feature type="binding site" description="in other chain" evidence="1">
    <location>
        <position position="98"/>
    </location>
    <ligand>
        <name>L-methionine</name>
        <dbReference type="ChEBI" id="CHEBI:57844"/>
        <note>ligand shared between two neighboring subunits</note>
    </ligand>
</feature>
<feature type="binding site" description="in other chain" evidence="1">
    <location>
        <begin position="172"/>
        <end position="174"/>
    </location>
    <ligand>
        <name>ATP</name>
        <dbReference type="ChEBI" id="CHEBI:30616"/>
        <note>ligand shared between two neighboring subunits</note>
    </ligand>
</feature>
<feature type="binding site" description="in other chain" evidence="1">
    <location>
        <begin position="238"/>
        <end position="239"/>
    </location>
    <ligand>
        <name>ATP</name>
        <dbReference type="ChEBI" id="CHEBI:30616"/>
        <note>ligand shared between two neighboring subunits</note>
    </ligand>
</feature>
<feature type="binding site" evidence="1">
    <location>
        <position position="247"/>
    </location>
    <ligand>
        <name>ATP</name>
        <dbReference type="ChEBI" id="CHEBI:30616"/>
        <note>ligand shared between two neighboring subunits</note>
    </ligand>
</feature>
<feature type="binding site" evidence="1">
    <location>
        <position position="247"/>
    </location>
    <ligand>
        <name>L-methionine</name>
        <dbReference type="ChEBI" id="CHEBI:57844"/>
        <note>ligand shared between two neighboring subunits</note>
    </ligand>
</feature>
<feature type="binding site" description="in other chain" evidence="1">
    <location>
        <begin position="253"/>
        <end position="254"/>
    </location>
    <ligand>
        <name>ATP</name>
        <dbReference type="ChEBI" id="CHEBI:30616"/>
        <note>ligand shared between two neighboring subunits</note>
    </ligand>
</feature>
<feature type="binding site" evidence="1">
    <location>
        <position position="270"/>
    </location>
    <ligand>
        <name>ATP</name>
        <dbReference type="ChEBI" id="CHEBI:30616"/>
        <note>ligand shared between two neighboring subunits</note>
    </ligand>
</feature>
<feature type="binding site" evidence="1">
    <location>
        <position position="274"/>
    </location>
    <ligand>
        <name>ATP</name>
        <dbReference type="ChEBI" id="CHEBI:30616"/>
        <note>ligand shared between two neighboring subunits</note>
    </ligand>
</feature>
<feature type="binding site" description="in other chain" evidence="1">
    <location>
        <position position="278"/>
    </location>
    <ligand>
        <name>L-methionine</name>
        <dbReference type="ChEBI" id="CHEBI:57844"/>
        <note>ligand shared between two neighboring subunits</note>
    </ligand>
</feature>
<comment type="function">
    <text evidence="1">Catalyzes the formation of S-adenosylmethionine (AdoMet) from methionine and ATP. The overall synthetic reaction is composed of two sequential steps, AdoMet formation and the subsequent tripolyphosphate hydrolysis which occurs prior to release of AdoMet from the enzyme.</text>
</comment>
<comment type="catalytic activity">
    <reaction evidence="1">
        <text>L-methionine + ATP + H2O = S-adenosyl-L-methionine + phosphate + diphosphate</text>
        <dbReference type="Rhea" id="RHEA:21080"/>
        <dbReference type="ChEBI" id="CHEBI:15377"/>
        <dbReference type="ChEBI" id="CHEBI:30616"/>
        <dbReference type="ChEBI" id="CHEBI:33019"/>
        <dbReference type="ChEBI" id="CHEBI:43474"/>
        <dbReference type="ChEBI" id="CHEBI:57844"/>
        <dbReference type="ChEBI" id="CHEBI:59789"/>
        <dbReference type="EC" id="2.5.1.6"/>
    </reaction>
</comment>
<comment type="cofactor">
    <cofactor evidence="1">
        <name>Mg(2+)</name>
        <dbReference type="ChEBI" id="CHEBI:18420"/>
    </cofactor>
    <text evidence="1">Binds 2 divalent ions per subunit.</text>
</comment>
<comment type="cofactor">
    <cofactor evidence="1">
        <name>K(+)</name>
        <dbReference type="ChEBI" id="CHEBI:29103"/>
    </cofactor>
    <text evidence="1">Binds 1 potassium ion per subunit.</text>
</comment>
<comment type="pathway">
    <text evidence="1">Amino-acid biosynthesis; S-adenosyl-L-methionine biosynthesis; S-adenosyl-L-methionine from L-methionine: step 1/1.</text>
</comment>
<comment type="subunit">
    <text evidence="1">Homotetramer; dimer of dimers.</text>
</comment>
<comment type="subcellular location">
    <subcellularLocation>
        <location evidence="1">Cytoplasm</location>
    </subcellularLocation>
</comment>
<comment type="similarity">
    <text evidence="1">Belongs to the AdoMet synthase family.</text>
</comment>
<gene>
    <name evidence="1" type="primary">metK</name>
    <name type="ordered locus">CBO0168</name>
    <name type="ordered locus">CLC_0222</name>
</gene>
<organism>
    <name type="scientific">Clostridium botulinum (strain Hall / ATCC 3502 / NCTC 13319 / Type A)</name>
    <dbReference type="NCBI Taxonomy" id="441771"/>
    <lineage>
        <taxon>Bacteria</taxon>
        <taxon>Bacillati</taxon>
        <taxon>Bacillota</taxon>
        <taxon>Clostridia</taxon>
        <taxon>Eubacteriales</taxon>
        <taxon>Clostridiaceae</taxon>
        <taxon>Clostridium</taxon>
    </lineage>
</organism>
<sequence length="391" mass="43026">MRKLFTSESVTEGHPDKICDQISDAVLDAILDKDPNGRVACETAVTTGMVMVMGEISTKCYVDIPKLVRETIRGIGYDRAKYGFDCETCSVITSIDEQSVDIAMGVDEALESKKGEMDKLDAVGAGDQGMMFGFATNETKEYMPMPIEMAHKLSRRLSEVRKNGTLPYLRPDGKTQVTVEYENGKPVRIDAIVISTQHGPEVYLEQIEKDIKEHVIKVIVPSELLDENTKYFINPTGRFVVGGPQGDSGLTGRKIIVDTYGGYGRHGGGAFSGKDPTKVDRSAAYAARWVAKNLVAAGVADKLEIQLAYAIGVAKPVSISVDTFGTGKMTDEEIVSIVNKVFDLRPGAIIRDLDLRRPIYKQVAAYGHFGRTDIDVPWERLDKVEEIKKHI</sequence>
<dbReference type="EC" id="2.5.1.6" evidence="1"/>
<dbReference type="EMBL" id="CP000727">
    <property type="protein sequence ID" value="ABS38205.1"/>
    <property type="molecule type" value="Genomic_DNA"/>
</dbReference>
<dbReference type="EMBL" id="AM412317">
    <property type="protein sequence ID" value="CAL81721.1"/>
    <property type="molecule type" value="Genomic_DNA"/>
</dbReference>
<dbReference type="RefSeq" id="WP_011947992.1">
    <property type="nucleotide sequence ID" value="NC_009698.1"/>
</dbReference>
<dbReference type="RefSeq" id="YP_001252713.1">
    <property type="nucleotide sequence ID" value="NC_009495.1"/>
</dbReference>
<dbReference type="RefSeq" id="YP_001386125.1">
    <property type="nucleotide sequence ID" value="NC_009698.1"/>
</dbReference>
<dbReference type="SMR" id="A5HY62"/>
<dbReference type="GeneID" id="5184423"/>
<dbReference type="KEGG" id="cbh:CLC_0222"/>
<dbReference type="KEGG" id="cbo:CBO0168"/>
<dbReference type="PATRIC" id="fig|413999.7.peg.165"/>
<dbReference type="HOGENOM" id="CLU_041802_1_1_9"/>
<dbReference type="UniPathway" id="UPA00315">
    <property type="reaction ID" value="UER00080"/>
</dbReference>
<dbReference type="PRO" id="PR:A5HY62"/>
<dbReference type="Proteomes" id="UP000001986">
    <property type="component" value="Chromosome"/>
</dbReference>
<dbReference type="GO" id="GO:0005829">
    <property type="term" value="C:cytosol"/>
    <property type="evidence" value="ECO:0000318"/>
    <property type="project" value="GO_Central"/>
</dbReference>
<dbReference type="GO" id="GO:0005524">
    <property type="term" value="F:ATP binding"/>
    <property type="evidence" value="ECO:0007669"/>
    <property type="project" value="UniProtKB-UniRule"/>
</dbReference>
<dbReference type="GO" id="GO:0000287">
    <property type="term" value="F:magnesium ion binding"/>
    <property type="evidence" value="ECO:0007669"/>
    <property type="project" value="UniProtKB-UniRule"/>
</dbReference>
<dbReference type="GO" id="GO:0004478">
    <property type="term" value="F:methionine adenosyltransferase activity"/>
    <property type="evidence" value="ECO:0000318"/>
    <property type="project" value="GO_Central"/>
</dbReference>
<dbReference type="GO" id="GO:0006730">
    <property type="term" value="P:one-carbon metabolic process"/>
    <property type="evidence" value="ECO:0007669"/>
    <property type="project" value="UniProtKB-KW"/>
</dbReference>
<dbReference type="GO" id="GO:0006556">
    <property type="term" value="P:S-adenosylmethionine biosynthetic process"/>
    <property type="evidence" value="ECO:0000318"/>
    <property type="project" value="GO_Central"/>
</dbReference>
<dbReference type="CDD" id="cd18079">
    <property type="entry name" value="S-AdoMet_synt"/>
    <property type="match status" value="1"/>
</dbReference>
<dbReference type="FunFam" id="3.30.300.10:FF:000003">
    <property type="entry name" value="S-adenosylmethionine synthase"/>
    <property type="match status" value="1"/>
</dbReference>
<dbReference type="FunFam" id="3.30.300.10:FF:000004">
    <property type="entry name" value="S-adenosylmethionine synthase"/>
    <property type="match status" value="1"/>
</dbReference>
<dbReference type="Gene3D" id="3.30.300.10">
    <property type="match status" value="3"/>
</dbReference>
<dbReference type="HAMAP" id="MF_00086">
    <property type="entry name" value="S_AdoMet_synth1"/>
    <property type="match status" value="1"/>
</dbReference>
<dbReference type="InterPro" id="IPR022631">
    <property type="entry name" value="ADOMET_SYNTHASE_CS"/>
</dbReference>
<dbReference type="InterPro" id="IPR022630">
    <property type="entry name" value="S-AdoMet_synt_C"/>
</dbReference>
<dbReference type="InterPro" id="IPR022629">
    <property type="entry name" value="S-AdoMet_synt_central"/>
</dbReference>
<dbReference type="InterPro" id="IPR022628">
    <property type="entry name" value="S-AdoMet_synt_N"/>
</dbReference>
<dbReference type="InterPro" id="IPR002133">
    <property type="entry name" value="S-AdoMet_synthetase"/>
</dbReference>
<dbReference type="InterPro" id="IPR022636">
    <property type="entry name" value="S-AdoMet_synthetase_sfam"/>
</dbReference>
<dbReference type="NCBIfam" id="TIGR01034">
    <property type="entry name" value="metK"/>
    <property type="match status" value="1"/>
</dbReference>
<dbReference type="PANTHER" id="PTHR11964">
    <property type="entry name" value="S-ADENOSYLMETHIONINE SYNTHETASE"/>
    <property type="match status" value="1"/>
</dbReference>
<dbReference type="Pfam" id="PF02773">
    <property type="entry name" value="S-AdoMet_synt_C"/>
    <property type="match status" value="1"/>
</dbReference>
<dbReference type="Pfam" id="PF02772">
    <property type="entry name" value="S-AdoMet_synt_M"/>
    <property type="match status" value="1"/>
</dbReference>
<dbReference type="Pfam" id="PF00438">
    <property type="entry name" value="S-AdoMet_synt_N"/>
    <property type="match status" value="1"/>
</dbReference>
<dbReference type="PIRSF" id="PIRSF000497">
    <property type="entry name" value="MAT"/>
    <property type="match status" value="1"/>
</dbReference>
<dbReference type="SUPFAM" id="SSF55973">
    <property type="entry name" value="S-adenosylmethionine synthetase"/>
    <property type="match status" value="3"/>
</dbReference>
<dbReference type="PROSITE" id="PS00376">
    <property type="entry name" value="ADOMET_SYNTHASE_1"/>
    <property type="match status" value="1"/>
</dbReference>
<dbReference type="PROSITE" id="PS00377">
    <property type="entry name" value="ADOMET_SYNTHASE_2"/>
    <property type="match status" value="1"/>
</dbReference>
<reference key="1">
    <citation type="journal article" date="2007" name="Genome Res.">
        <title>Genome sequence of a proteolytic (Group I) Clostridium botulinum strain Hall A and comparative analysis of the clostridial genomes.</title>
        <authorList>
            <person name="Sebaihia M."/>
            <person name="Peck M.W."/>
            <person name="Minton N.P."/>
            <person name="Thomson N.R."/>
            <person name="Holden M.T.G."/>
            <person name="Mitchell W.J."/>
            <person name="Carter A.T."/>
            <person name="Bentley S.D."/>
            <person name="Mason D.R."/>
            <person name="Crossman L."/>
            <person name="Paul C.J."/>
            <person name="Ivens A."/>
            <person name="Wells-Bennik M.H.J."/>
            <person name="Davis I.J."/>
            <person name="Cerdeno-Tarraga A.M."/>
            <person name="Churcher C."/>
            <person name="Quail M.A."/>
            <person name="Chillingworth T."/>
            <person name="Feltwell T."/>
            <person name="Fraser A."/>
            <person name="Goodhead I."/>
            <person name="Hance Z."/>
            <person name="Jagels K."/>
            <person name="Larke N."/>
            <person name="Maddison M."/>
            <person name="Moule S."/>
            <person name="Mungall K."/>
            <person name="Norbertczak H."/>
            <person name="Rabbinowitsch E."/>
            <person name="Sanders M."/>
            <person name="Simmonds M."/>
            <person name="White B."/>
            <person name="Whithead S."/>
            <person name="Parkhill J."/>
        </authorList>
    </citation>
    <scope>NUCLEOTIDE SEQUENCE [LARGE SCALE GENOMIC DNA]</scope>
    <source>
        <strain>Hall / ATCC 3502 / NCTC 13319 / Type A</strain>
    </source>
</reference>
<reference key="2">
    <citation type="journal article" date="2007" name="PLoS ONE">
        <title>Analysis of the neurotoxin complex genes in Clostridium botulinum A1-A4 and B1 strains: BoNT/A3, /Ba4 and /B1 clusters are located within plasmids.</title>
        <authorList>
            <person name="Smith T.J."/>
            <person name="Hill K.K."/>
            <person name="Foley B.T."/>
            <person name="Detter J.C."/>
            <person name="Munk A.C."/>
            <person name="Bruce D.C."/>
            <person name="Doggett N.A."/>
            <person name="Smith L.A."/>
            <person name="Marks J.D."/>
            <person name="Xie G."/>
            <person name="Brettin T.S."/>
        </authorList>
    </citation>
    <scope>NUCLEOTIDE SEQUENCE [LARGE SCALE GENOMIC DNA]</scope>
    <source>
        <strain>Hall / ATCC 3502 / NCTC 13319 / Type A</strain>
    </source>
</reference>
<proteinExistence type="inferred from homology"/>
<keyword id="KW-0067">ATP-binding</keyword>
<keyword id="KW-0963">Cytoplasm</keyword>
<keyword id="KW-0460">Magnesium</keyword>
<keyword id="KW-0479">Metal-binding</keyword>
<keyword id="KW-0547">Nucleotide-binding</keyword>
<keyword id="KW-0554">One-carbon metabolism</keyword>
<keyword id="KW-0630">Potassium</keyword>
<keyword id="KW-1185">Reference proteome</keyword>
<keyword id="KW-0808">Transferase</keyword>
<name>METK_CLOBH</name>
<protein>
    <recommendedName>
        <fullName evidence="1">S-adenosylmethionine synthase</fullName>
        <shortName evidence="1">AdoMet synthase</shortName>
        <ecNumber evidence="1">2.5.1.6</ecNumber>
    </recommendedName>
    <alternativeName>
        <fullName evidence="1">MAT</fullName>
    </alternativeName>
    <alternativeName>
        <fullName evidence="1">Methionine adenosyltransferase</fullName>
    </alternativeName>
</protein>
<evidence type="ECO:0000255" key="1">
    <source>
        <dbReference type="HAMAP-Rule" id="MF_00086"/>
    </source>
</evidence>
<accession>A5HY62</accession>
<accession>A7G082</accession>